<comment type="function">
    <text evidence="1">May act as a carrier of hyaluronan in serum or as a binding protein between hyaluronan and other matrix protein, including those on cell surfaces in tissues to regulate the localization, synthesis and degradation of hyaluronan which are essential to cells undergoing biological processes.</text>
</comment>
<comment type="subunit">
    <text evidence="2">I-alpha-I plasma protease inhibitors are assembled from one or two heavy chains (HC) and one light chain, bikunin. Pre-alpha-inhibitor (P-alpha-I) is composed of ITIH3/HC3 and bikunin.</text>
</comment>
<comment type="subcellular location">
    <subcellularLocation>
        <location>Secreted</location>
    </subcellularLocation>
</comment>
<comment type="tissue specificity">
    <text>Expressed in both liver and brain.</text>
</comment>
<comment type="PTM">
    <text evidence="1">Heavy chains are linked to bikunin via chondroitin 4-sulfate esterified to the alpha-carboxyl of the C-terminal aspartate after propeptide cleavage.</text>
</comment>
<comment type="similarity">
    <text evidence="7">Belongs to the ITIH family.</text>
</comment>
<comment type="sequence caution" evidence="7">
    <conflict type="erroneous initiation">
        <sequence resource="EMBL-CDS" id="AAH15276"/>
    </conflict>
    <text>Truncated N-terminus.</text>
</comment>
<comment type="sequence caution" evidence="7">
    <conflict type="erroneous initiation">
        <sequence resource="EMBL-CDS" id="CAA49843"/>
    </conflict>
    <text>Truncated N-terminus.</text>
</comment>
<sequence>MRTMWWPCLVLALLSGLETSGFPRSPLQLLGKRSLPEGVVDGIEVYSTKISCKVTSRFAHNVVTTRAVNRADTAKEVSFDVELPKTAFITNFTLTIDGVTYPGNVKEKEVAQKQYEKAVSQGKTAGLVKASGRKLEKFTVSVNVAAGSKVTFELTYEELLKRNKGKYEMYLKVQPKQLVRHFEIDAHIFEPQGISMLDAEASFITNDLLGSALTKSFSGKKGHVSFKPSLDQQRSCPTCTDSLLNGDFTIVYDVNRESPGNVQIVNGYFVHFFAPQGLPVVPKNIVFVIDVSGSMSGRKIQQTREALLKILDDVKEDDYLNFILFSTDVTTWKDHLVQATPANLKEAKTFVKNIHDQSMTNINDGLLKGIEMLNKAREDHTVPERSTSIIIMLTDGDANTGESRPEKIQENVRNAIGGKFPLYNLGFGNNLNYNFLETLALENHGLARRIYEDSDANLQLQGFYEEVANPLLTNVEVEYPENAILDLTRNSYPHFYDGSEIVVAGRLVDRNMDNFKADVKGHGALNDLTFTEEVDMEEMDAALKEQGYIFGDYIERLWAYLTIEQLLEKRKNAKGDEKENITAEALDLSLKYHFVTPLTSMVVTKPEDNEDQTSIADKPGEEAIAETTTMSFLTTQQSSQSPYYYVDGDPHFIIQIPGKNDSICFNIDEKPGTVLRLIQDPVTGITVTGQIIGDKRSNASSRTGKTYFGKLGITNAWMDFRVEVTTEKIILGTGAELSTFSWLDTITVTQTGLSVTINRKKNMVVSFGDGISFVIILHQVWKKHPVHQDFLGFYVVDSHRMSAQTHGLLGQFFQPFDFKVFGIRPGSDPTKPDATMVVKNHRLTVTRGSQKDYRKDASVGTKVICWFVHNNGEGLIDGVHTDYIVPSLF</sequence>
<accession>Q61704</accession>
<accession>E9QME9</accession>
<accession>Q91WG9</accession>
<evidence type="ECO:0000250" key="1"/>
<evidence type="ECO:0000250" key="2">
    <source>
        <dbReference type="UniProtKB" id="Q06033"/>
    </source>
</evidence>
<evidence type="ECO:0000255" key="3"/>
<evidence type="ECO:0000255" key="4">
    <source>
        <dbReference type="PROSITE-ProRule" id="PRU00219"/>
    </source>
</evidence>
<evidence type="ECO:0000255" key="5">
    <source>
        <dbReference type="PROSITE-ProRule" id="PRU00801"/>
    </source>
</evidence>
<evidence type="ECO:0000269" key="6">
    <source>
    </source>
</evidence>
<evidence type="ECO:0000305" key="7"/>
<dbReference type="EMBL" id="AK146700">
    <property type="status" value="NOT_ANNOTATED_CDS"/>
    <property type="molecule type" value="mRNA"/>
</dbReference>
<dbReference type="EMBL" id="CT025528">
    <property type="status" value="NOT_ANNOTATED_CDS"/>
    <property type="molecule type" value="Genomic_DNA"/>
</dbReference>
<dbReference type="EMBL" id="X70393">
    <property type="protein sequence ID" value="CAA49843.1"/>
    <property type="status" value="ALT_INIT"/>
    <property type="molecule type" value="mRNA"/>
</dbReference>
<dbReference type="EMBL" id="BC015276">
    <property type="protein sequence ID" value="AAH15276.1"/>
    <property type="status" value="ALT_INIT"/>
    <property type="molecule type" value="mRNA"/>
</dbReference>
<dbReference type="CCDS" id="CCDS49434.1"/>
<dbReference type="PIR" id="S54355">
    <property type="entry name" value="S54355"/>
</dbReference>
<dbReference type="RefSeq" id="NP_032433.2">
    <property type="nucleotide sequence ID" value="NM_008407.3"/>
</dbReference>
<dbReference type="SMR" id="Q61704"/>
<dbReference type="BioGRID" id="200838">
    <property type="interactions" value="2"/>
</dbReference>
<dbReference type="FunCoup" id="Q61704">
    <property type="interactions" value="150"/>
</dbReference>
<dbReference type="IntAct" id="Q61704">
    <property type="interactions" value="1"/>
</dbReference>
<dbReference type="MINT" id="Q61704"/>
<dbReference type="STRING" id="10090.ENSMUSP00000006697"/>
<dbReference type="CarbonylDB" id="Q61704"/>
<dbReference type="GlyConnect" id="776">
    <property type="glycosylation" value="1 N-Linked glycan (1 site)"/>
</dbReference>
<dbReference type="GlyCosmos" id="Q61704">
    <property type="glycosylation" value="2 sites, 2 glycans"/>
</dbReference>
<dbReference type="GlyGen" id="Q61704">
    <property type="glycosylation" value="5 sites, 3 N-linked glycans (3 sites), 1 O-linked glycan (1 site)"/>
</dbReference>
<dbReference type="iPTMnet" id="Q61704"/>
<dbReference type="PhosphoSitePlus" id="Q61704"/>
<dbReference type="CPTAC" id="non-CPTAC-3354"/>
<dbReference type="jPOST" id="Q61704"/>
<dbReference type="PaxDb" id="10090-ENSMUSP00000006697"/>
<dbReference type="PeptideAtlas" id="Q61704"/>
<dbReference type="ProteomicsDB" id="269107"/>
<dbReference type="Antibodypedia" id="7471">
    <property type="antibodies" value="106 antibodies from 23 providers"/>
</dbReference>
<dbReference type="DNASU" id="16426"/>
<dbReference type="Ensembl" id="ENSMUST00000006697.17">
    <property type="protein sequence ID" value="ENSMUSP00000006697.9"/>
    <property type="gene ID" value="ENSMUSG00000006522.18"/>
</dbReference>
<dbReference type="GeneID" id="16426"/>
<dbReference type="KEGG" id="mmu:16426"/>
<dbReference type="UCSC" id="uc033goy.1">
    <property type="organism name" value="mouse"/>
</dbReference>
<dbReference type="AGR" id="MGI:96620"/>
<dbReference type="CTD" id="3699"/>
<dbReference type="MGI" id="MGI:96620">
    <property type="gene designation" value="Itih3"/>
</dbReference>
<dbReference type="VEuPathDB" id="HostDB:ENSMUSG00000006522"/>
<dbReference type="eggNOG" id="ENOG502QPS2">
    <property type="taxonomic scope" value="Eukaryota"/>
</dbReference>
<dbReference type="GeneTree" id="ENSGT00940000154554"/>
<dbReference type="InParanoid" id="Q61704"/>
<dbReference type="OMA" id="EFIYWIN"/>
<dbReference type="OrthoDB" id="299997at2759"/>
<dbReference type="PhylomeDB" id="Q61704"/>
<dbReference type="TreeFam" id="TF328982"/>
<dbReference type="Reactome" id="R-MMU-114608">
    <property type="pathway name" value="Platelet degranulation"/>
</dbReference>
<dbReference type="BioGRID-ORCS" id="16426">
    <property type="hits" value="1 hit in 78 CRISPR screens"/>
</dbReference>
<dbReference type="PRO" id="PR:Q61704"/>
<dbReference type="Proteomes" id="UP000000589">
    <property type="component" value="Chromosome 14"/>
</dbReference>
<dbReference type="RNAct" id="Q61704">
    <property type="molecule type" value="protein"/>
</dbReference>
<dbReference type="Bgee" id="ENSMUSG00000006522">
    <property type="expression patterns" value="Expressed in ventromedial nucleus of hypothalamus and 110 other cell types or tissues"/>
</dbReference>
<dbReference type="ExpressionAtlas" id="Q61704">
    <property type="expression patterns" value="baseline and differential"/>
</dbReference>
<dbReference type="GO" id="GO:0062023">
    <property type="term" value="C:collagen-containing extracellular matrix"/>
    <property type="evidence" value="ECO:0007005"/>
    <property type="project" value="BHF-UCL"/>
</dbReference>
<dbReference type="GO" id="GO:0005576">
    <property type="term" value="C:extracellular region"/>
    <property type="evidence" value="ECO:0007669"/>
    <property type="project" value="UniProtKB-SubCell"/>
</dbReference>
<dbReference type="GO" id="GO:0004867">
    <property type="term" value="F:serine-type endopeptidase inhibitor activity"/>
    <property type="evidence" value="ECO:0007669"/>
    <property type="project" value="UniProtKB-KW"/>
</dbReference>
<dbReference type="GO" id="GO:0030212">
    <property type="term" value="P:hyaluronan metabolic process"/>
    <property type="evidence" value="ECO:0007669"/>
    <property type="project" value="InterPro"/>
</dbReference>
<dbReference type="FunFam" id="3.40.50.410:FF:000013">
    <property type="entry name" value="inter-alpha-trypsin inhibitor heavy chain H2"/>
    <property type="match status" value="1"/>
</dbReference>
<dbReference type="Gene3D" id="3.40.50.410">
    <property type="entry name" value="von Willebrand factor, type A domain"/>
    <property type="match status" value="1"/>
</dbReference>
<dbReference type="InterPro" id="IPR010600">
    <property type="entry name" value="ITI_HC_C"/>
</dbReference>
<dbReference type="InterPro" id="IPR050934">
    <property type="entry name" value="ITIH"/>
</dbReference>
<dbReference type="InterPro" id="IPR013694">
    <property type="entry name" value="VIT"/>
</dbReference>
<dbReference type="InterPro" id="IPR002035">
    <property type="entry name" value="VWF_A"/>
</dbReference>
<dbReference type="InterPro" id="IPR036465">
    <property type="entry name" value="vWFA_dom_sf"/>
</dbReference>
<dbReference type="PANTHER" id="PTHR10338">
    <property type="entry name" value="INTER-ALPHA-TRYPSIN INHIBITOR HEAVY CHAIN FAMILY MEMBER"/>
    <property type="match status" value="1"/>
</dbReference>
<dbReference type="PANTHER" id="PTHR10338:SF115">
    <property type="entry name" value="INTER-ALPHA-TRYPSIN INHIBITOR HEAVY CHAIN H3"/>
    <property type="match status" value="1"/>
</dbReference>
<dbReference type="Pfam" id="PF06668">
    <property type="entry name" value="ITI_HC_C"/>
    <property type="match status" value="1"/>
</dbReference>
<dbReference type="Pfam" id="PF08487">
    <property type="entry name" value="VIT"/>
    <property type="match status" value="1"/>
</dbReference>
<dbReference type="Pfam" id="PF00092">
    <property type="entry name" value="VWA"/>
    <property type="match status" value="1"/>
</dbReference>
<dbReference type="SMART" id="SM00609">
    <property type="entry name" value="VIT"/>
    <property type="match status" value="1"/>
</dbReference>
<dbReference type="SMART" id="SM00327">
    <property type="entry name" value="VWA"/>
    <property type="match status" value="1"/>
</dbReference>
<dbReference type="SUPFAM" id="SSF53300">
    <property type="entry name" value="vWA-like"/>
    <property type="match status" value="1"/>
</dbReference>
<dbReference type="PROSITE" id="PS51468">
    <property type="entry name" value="VIT"/>
    <property type="match status" value="1"/>
</dbReference>
<dbReference type="PROSITE" id="PS50234">
    <property type="entry name" value="VWFA"/>
    <property type="match status" value="1"/>
</dbReference>
<feature type="signal peptide" evidence="3">
    <location>
        <begin position="1"/>
        <end position="21"/>
    </location>
</feature>
<feature type="propeptide" id="PRO_0000016535" evidence="1">
    <location>
        <begin position="22"/>
        <end position="33"/>
    </location>
</feature>
<feature type="chain" id="PRO_0000016536" description="Inter-alpha-trypsin inhibitor heavy chain H3">
    <location>
        <begin position="34"/>
        <end position="649"/>
    </location>
</feature>
<feature type="propeptide" id="PRO_0000016537" evidence="1">
    <location>
        <begin position="650"/>
        <end position="889"/>
    </location>
</feature>
<feature type="domain" description="VIT" evidence="5">
    <location>
        <begin position="29"/>
        <end position="158"/>
    </location>
</feature>
<feature type="domain" description="VWFA" evidence="4">
    <location>
        <begin position="284"/>
        <end position="467"/>
    </location>
</feature>
<feature type="modified residue" description="Aspartate 1-(chondroitin 4-sulfate)-ester" evidence="1">
    <location>
        <position position="649"/>
    </location>
</feature>
<feature type="glycosylation site" description="N-linked (GlcNAc...) asparagine" evidence="3">
    <location>
        <position position="91"/>
    </location>
</feature>
<feature type="glycosylation site" description="N-linked (GlcNAc...) asparagine" evidence="6">
    <location>
        <position position="580"/>
    </location>
</feature>
<feature type="sequence conflict" description="In Ref. 3; CAA49843." evidence="7" ref="3">
    <original>T</original>
    <variation>A</variation>
    <location>
        <position position="3"/>
    </location>
</feature>
<feature type="sequence conflict" description="In Ref. 3; CAA49843 and 4; AAH15276." evidence="7" ref="3 4">
    <original>Q</original>
    <variation>R</variation>
    <location>
        <position position="28"/>
    </location>
</feature>
<feature type="sequence conflict" description="In Ref. 3; CAA49843." evidence="7" ref="3">
    <original>KP</original>
    <variation>NA</variation>
    <location>
        <begin position="618"/>
        <end position="619"/>
    </location>
</feature>
<feature type="sequence conflict" description="In Ref. 3; CAA49843." evidence="7" ref="3">
    <original>I</original>
    <variation>F</variation>
    <location>
        <position position="624"/>
    </location>
</feature>
<feature type="sequence conflict" description="In Ref. 3; CAA49843 and 4; AAH15276." evidence="7" ref="3 4">
    <original>I</original>
    <variation>V</variation>
    <location>
        <position position="746"/>
    </location>
</feature>
<name>ITIH3_MOUSE</name>
<organism>
    <name type="scientific">Mus musculus</name>
    <name type="common">Mouse</name>
    <dbReference type="NCBI Taxonomy" id="10090"/>
    <lineage>
        <taxon>Eukaryota</taxon>
        <taxon>Metazoa</taxon>
        <taxon>Chordata</taxon>
        <taxon>Craniata</taxon>
        <taxon>Vertebrata</taxon>
        <taxon>Euteleostomi</taxon>
        <taxon>Mammalia</taxon>
        <taxon>Eutheria</taxon>
        <taxon>Euarchontoglires</taxon>
        <taxon>Glires</taxon>
        <taxon>Rodentia</taxon>
        <taxon>Myomorpha</taxon>
        <taxon>Muroidea</taxon>
        <taxon>Muridae</taxon>
        <taxon>Murinae</taxon>
        <taxon>Mus</taxon>
        <taxon>Mus</taxon>
    </lineage>
</organism>
<gene>
    <name type="primary">Itih3</name>
</gene>
<keyword id="KW-0165">Cleavage on pair of basic residues</keyword>
<keyword id="KW-0325">Glycoprotein</keyword>
<keyword id="KW-0646">Protease inhibitor</keyword>
<keyword id="KW-0654">Proteoglycan</keyword>
<keyword id="KW-1185">Reference proteome</keyword>
<keyword id="KW-0964">Secreted</keyword>
<keyword id="KW-0722">Serine protease inhibitor</keyword>
<keyword id="KW-0732">Signal</keyword>
<proteinExistence type="evidence at protein level"/>
<reference key="1">
    <citation type="journal article" date="2005" name="Science">
        <title>The transcriptional landscape of the mammalian genome.</title>
        <authorList>
            <person name="Carninci P."/>
            <person name="Kasukawa T."/>
            <person name="Katayama S."/>
            <person name="Gough J."/>
            <person name="Frith M.C."/>
            <person name="Maeda N."/>
            <person name="Oyama R."/>
            <person name="Ravasi T."/>
            <person name="Lenhard B."/>
            <person name="Wells C."/>
            <person name="Kodzius R."/>
            <person name="Shimokawa K."/>
            <person name="Bajic V.B."/>
            <person name="Brenner S.E."/>
            <person name="Batalov S."/>
            <person name="Forrest A.R."/>
            <person name="Zavolan M."/>
            <person name="Davis M.J."/>
            <person name="Wilming L.G."/>
            <person name="Aidinis V."/>
            <person name="Allen J.E."/>
            <person name="Ambesi-Impiombato A."/>
            <person name="Apweiler R."/>
            <person name="Aturaliya R.N."/>
            <person name="Bailey T.L."/>
            <person name="Bansal M."/>
            <person name="Baxter L."/>
            <person name="Beisel K.W."/>
            <person name="Bersano T."/>
            <person name="Bono H."/>
            <person name="Chalk A.M."/>
            <person name="Chiu K.P."/>
            <person name="Choudhary V."/>
            <person name="Christoffels A."/>
            <person name="Clutterbuck D.R."/>
            <person name="Crowe M.L."/>
            <person name="Dalla E."/>
            <person name="Dalrymple B.P."/>
            <person name="de Bono B."/>
            <person name="Della Gatta G."/>
            <person name="di Bernardo D."/>
            <person name="Down T."/>
            <person name="Engstrom P."/>
            <person name="Fagiolini M."/>
            <person name="Faulkner G."/>
            <person name="Fletcher C.F."/>
            <person name="Fukushima T."/>
            <person name="Furuno M."/>
            <person name="Futaki S."/>
            <person name="Gariboldi M."/>
            <person name="Georgii-Hemming P."/>
            <person name="Gingeras T.R."/>
            <person name="Gojobori T."/>
            <person name="Green R.E."/>
            <person name="Gustincich S."/>
            <person name="Harbers M."/>
            <person name="Hayashi Y."/>
            <person name="Hensch T.K."/>
            <person name="Hirokawa N."/>
            <person name="Hill D."/>
            <person name="Huminiecki L."/>
            <person name="Iacono M."/>
            <person name="Ikeo K."/>
            <person name="Iwama A."/>
            <person name="Ishikawa T."/>
            <person name="Jakt M."/>
            <person name="Kanapin A."/>
            <person name="Katoh M."/>
            <person name="Kawasawa Y."/>
            <person name="Kelso J."/>
            <person name="Kitamura H."/>
            <person name="Kitano H."/>
            <person name="Kollias G."/>
            <person name="Krishnan S.P."/>
            <person name="Kruger A."/>
            <person name="Kummerfeld S.K."/>
            <person name="Kurochkin I.V."/>
            <person name="Lareau L.F."/>
            <person name="Lazarevic D."/>
            <person name="Lipovich L."/>
            <person name="Liu J."/>
            <person name="Liuni S."/>
            <person name="McWilliam S."/>
            <person name="Madan Babu M."/>
            <person name="Madera M."/>
            <person name="Marchionni L."/>
            <person name="Matsuda H."/>
            <person name="Matsuzawa S."/>
            <person name="Miki H."/>
            <person name="Mignone F."/>
            <person name="Miyake S."/>
            <person name="Morris K."/>
            <person name="Mottagui-Tabar S."/>
            <person name="Mulder N."/>
            <person name="Nakano N."/>
            <person name="Nakauchi H."/>
            <person name="Ng P."/>
            <person name="Nilsson R."/>
            <person name="Nishiguchi S."/>
            <person name="Nishikawa S."/>
            <person name="Nori F."/>
            <person name="Ohara O."/>
            <person name="Okazaki Y."/>
            <person name="Orlando V."/>
            <person name="Pang K.C."/>
            <person name="Pavan W.J."/>
            <person name="Pavesi G."/>
            <person name="Pesole G."/>
            <person name="Petrovsky N."/>
            <person name="Piazza S."/>
            <person name="Reed J."/>
            <person name="Reid J.F."/>
            <person name="Ring B.Z."/>
            <person name="Ringwald M."/>
            <person name="Rost B."/>
            <person name="Ruan Y."/>
            <person name="Salzberg S.L."/>
            <person name="Sandelin A."/>
            <person name="Schneider C."/>
            <person name="Schoenbach C."/>
            <person name="Sekiguchi K."/>
            <person name="Semple C.A."/>
            <person name="Seno S."/>
            <person name="Sessa L."/>
            <person name="Sheng Y."/>
            <person name="Shibata Y."/>
            <person name="Shimada H."/>
            <person name="Shimada K."/>
            <person name="Silva D."/>
            <person name="Sinclair B."/>
            <person name="Sperling S."/>
            <person name="Stupka E."/>
            <person name="Sugiura K."/>
            <person name="Sultana R."/>
            <person name="Takenaka Y."/>
            <person name="Taki K."/>
            <person name="Tammoja K."/>
            <person name="Tan S.L."/>
            <person name="Tang S."/>
            <person name="Taylor M.S."/>
            <person name="Tegner J."/>
            <person name="Teichmann S.A."/>
            <person name="Ueda H.R."/>
            <person name="van Nimwegen E."/>
            <person name="Verardo R."/>
            <person name="Wei C.L."/>
            <person name="Yagi K."/>
            <person name="Yamanishi H."/>
            <person name="Zabarovsky E."/>
            <person name="Zhu S."/>
            <person name="Zimmer A."/>
            <person name="Hide W."/>
            <person name="Bult C."/>
            <person name="Grimmond S.M."/>
            <person name="Teasdale R.D."/>
            <person name="Liu E.T."/>
            <person name="Brusic V."/>
            <person name="Quackenbush J."/>
            <person name="Wahlestedt C."/>
            <person name="Mattick J.S."/>
            <person name="Hume D.A."/>
            <person name="Kai C."/>
            <person name="Sasaki D."/>
            <person name="Tomaru Y."/>
            <person name="Fukuda S."/>
            <person name="Kanamori-Katayama M."/>
            <person name="Suzuki M."/>
            <person name="Aoki J."/>
            <person name="Arakawa T."/>
            <person name="Iida J."/>
            <person name="Imamura K."/>
            <person name="Itoh M."/>
            <person name="Kato T."/>
            <person name="Kawaji H."/>
            <person name="Kawagashira N."/>
            <person name="Kawashima T."/>
            <person name="Kojima M."/>
            <person name="Kondo S."/>
            <person name="Konno H."/>
            <person name="Nakano K."/>
            <person name="Ninomiya N."/>
            <person name="Nishio T."/>
            <person name="Okada M."/>
            <person name="Plessy C."/>
            <person name="Shibata K."/>
            <person name="Shiraki T."/>
            <person name="Suzuki S."/>
            <person name="Tagami M."/>
            <person name="Waki K."/>
            <person name="Watahiki A."/>
            <person name="Okamura-Oho Y."/>
            <person name="Suzuki H."/>
            <person name="Kawai J."/>
            <person name="Hayashizaki Y."/>
        </authorList>
    </citation>
    <scope>NUCLEOTIDE SEQUENCE [LARGE SCALE MRNA]</scope>
</reference>
<reference key="2">
    <citation type="journal article" date="2009" name="PLoS Biol.">
        <title>Lineage-specific biology revealed by a finished genome assembly of the mouse.</title>
        <authorList>
            <person name="Church D.M."/>
            <person name="Goodstadt L."/>
            <person name="Hillier L.W."/>
            <person name="Zody M.C."/>
            <person name="Goldstein S."/>
            <person name="She X."/>
            <person name="Bult C.J."/>
            <person name="Agarwala R."/>
            <person name="Cherry J.L."/>
            <person name="DiCuccio M."/>
            <person name="Hlavina W."/>
            <person name="Kapustin Y."/>
            <person name="Meric P."/>
            <person name="Maglott D."/>
            <person name="Birtle Z."/>
            <person name="Marques A.C."/>
            <person name="Graves T."/>
            <person name="Zhou S."/>
            <person name="Teague B."/>
            <person name="Potamousis K."/>
            <person name="Churas C."/>
            <person name="Place M."/>
            <person name="Herschleb J."/>
            <person name="Runnheim R."/>
            <person name="Forrest D."/>
            <person name="Amos-Landgraf J."/>
            <person name="Schwartz D.C."/>
            <person name="Cheng Z."/>
            <person name="Lindblad-Toh K."/>
            <person name="Eichler E.E."/>
            <person name="Ponting C.P."/>
        </authorList>
    </citation>
    <scope>NUCLEOTIDE SEQUENCE [LARGE SCALE GENOMIC DNA]</scope>
    <source>
        <strain>C57BL/6J</strain>
    </source>
</reference>
<reference key="3">
    <citation type="journal article" date="1995" name="Biochem. J.">
        <title>The three heavy-chain precursors for the inter-alpha-inhibitor family in mouse: new members of the multicopper oxidase protein group with differential transcription in liver and brain.</title>
        <authorList>
            <person name="Chan P."/>
            <person name="Risler J.-L."/>
            <person name="Raguenez G."/>
            <person name="Salier J.-P."/>
        </authorList>
    </citation>
    <scope>NUCLEOTIDE SEQUENCE [MRNA] OF 3-889</scope>
    <source>
        <strain>C57BL/6N</strain>
        <tissue>Liver</tissue>
    </source>
</reference>
<reference key="4">
    <citation type="journal article" date="2004" name="Genome Res.">
        <title>The status, quality, and expansion of the NIH full-length cDNA project: the Mammalian Gene Collection (MGC).</title>
        <authorList>
            <consortium name="The MGC Project Team"/>
        </authorList>
    </citation>
    <scope>NUCLEOTIDE SEQUENCE [LARGE SCALE MRNA] OF 3-889</scope>
    <source>
        <strain>FVB/N</strain>
        <tissue>Liver</tissue>
    </source>
</reference>
<reference key="5">
    <citation type="journal article" date="2006" name="J. Proteome Res.">
        <title>Proteome-wide characterization of N-glycosylation events by diagonal chromatography.</title>
        <authorList>
            <person name="Ghesquiere B."/>
            <person name="Van Damme J."/>
            <person name="Martens L."/>
            <person name="Vandekerckhove J."/>
            <person name="Gevaert K."/>
        </authorList>
    </citation>
    <scope>GLYCOSYLATION [LARGE SCALE ANALYSIS] AT ASN-580</scope>
    <source>
        <strain>C57BL/6J</strain>
        <tissue>Plasma</tissue>
    </source>
</reference>
<reference key="6">
    <citation type="journal article" date="2010" name="Cell">
        <title>A tissue-specific atlas of mouse protein phosphorylation and expression.</title>
        <authorList>
            <person name="Huttlin E.L."/>
            <person name="Jedrychowski M.P."/>
            <person name="Elias J.E."/>
            <person name="Goswami T."/>
            <person name="Rad R."/>
            <person name="Beausoleil S.A."/>
            <person name="Villen J."/>
            <person name="Haas W."/>
            <person name="Sowa M.E."/>
            <person name="Gygi S.P."/>
        </authorList>
    </citation>
    <scope>IDENTIFICATION BY MASS SPECTROMETRY [LARGE SCALE ANALYSIS]</scope>
    <source>
        <tissue>Brain</tissue>
        <tissue>Brown adipose tissue</tissue>
        <tissue>Heart</tissue>
        <tissue>Kidney</tissue>
        <tissue>Liver</tissue>
        <tissue>Lung</tissue>
        <tissue>Spleen</tissue>
        <tissue>Testis</tissue>
    </source>
</reference>
<protein>
    <recommendedName>
        <fullName>Inter-alpha-trypsin inhibitor heavy chain H3</fullName>
        <shortName>ITI heavy chain H3</shortName>
        <shortName>ITI-HC3</shortName>
        <shortName>Inter-alpha-inhibitor heavy chain 3</shortName>
    </recommendedName>
</protein>